<proteinExistence type="inferred from homology"/>
<sequence length="268" mass="29649">MIKTVLFGACGKMGKVIGKALIDATDIELVGAIDPYFKGEKYEKIIGIDKISLEVVESIDELQEDFDVAIDFTNAEAAYQNIKKVLQKGKRMVVGTTGLTQEMMEEFKDLAVKNKTAILIAPNFALGAVLMIQLAKQVVKYFPDVEIIELHHNEKADAPSGTAILTAEVLREEMKKYNLTHKDATKIEKLPGARGGKLDSINIHSVRLPGLVAHQEVIFGGLGQTLSIRHDALSRECYIPGVLMAVREIVKREGFFYGLESFLNREEA</sequence>
<reference key="1">
    <citation type="journal article" date="2016" name="Front. Microbiol.">
        <title>The complete genome sequence of hyperthermophile Dictyoglomus turgidum DSM 6724 reveals a specialized carbohydrate fermentor.</title>
        <authorList>
            <person name="Brumm P.J."/>
            <person name="Gowda K."/>
            <person name="Robb F.T."/>
            <person name="Mead D.A."/>
        </authorList>
    </citation>
    <scope>NUCLEOTIDE SEQUENCE [LARGE SCALE GENOMIC DNA]</scope>
    <source>
        <strain>DSM 6724 / Z-1310</strain>
    </source>
</reference>
<name>DAPB_DICTD</name>
<keyword id="KW-0028">Amino-acid biosynthesis</keyword>
<keyword id="KW-0963">Cytoplasm</keyword>
<keyword id="KW-0220">Diaminopimelate biosynthesis</keyword>
<keyword id="KW-0457">Lysine biosynthesis</keyword>
<keyword id="KW-0520">NAD</keyword>
<keyword id="KW-0521">NADP</keyword>
<keyword id="KW-0560">Oxidoreductase</keyword>
<keyword id="KW-1185">Reference proteome</keyword>
<organism>
    <name type="scientific">Dictyoglomus turgidum (strain DSM 6724 / Z-1310)</name>
    <dbReference type="NCBI Taxonomy" id="515635"/>
    <lineage>
        <taxon>Bacteria</taxon>
        <taxon>Pseudomonadati</taxon>
        <taxon>Dictyoglomota</taxon>
        <taxon>Dictyoglomia</taxon>
        <taxon>Dictyoglomales</taxon>
        <taxon>Dictyoglomaceae</taxon>
        <taxon>Dictyoglomus</taxon>
    </lineage>
</organism>
<dbReference type="EC" id="1.17.1.8" evidence="1"/>
<dbReference type="EMBL" id="CP001251">
    <property type="protein sequence ID" value="ACK42427.1"/>
    <property type="molecule type" value="Genomic_DNA"/>
</dbReference>
<dbReference type="RefSeq" id="WP_012583509.1">
    <property type="nucleotide sequence ID" value="NC_011661.1"/>
</dbReference>
<dbReference type="RefSeq" id="YP_002353041.1">
    <property type="nucleotide sequence ID" value="NC_011661.1"/>
</dbReference>
<dbReference type="SMR" id="B8E2S7"/>
<dbReference type="FunCoup" id="B8E2S7">
    <property type="interactions" value="412"/>
</dbReference>
<dbReference type="STRING" id="515635.Dtur_1148"/>
<dbReference type="EnsemblBacteria" id="ACK42427">
    <property type="protein sequence ID" value="ACK42427"/>
    <property type="gene ID" value="Dtur_1148"/>
</dbReference>
<dbReference type="KEGG" id="dtu:Dtur_1148"/>
<dbReference type="PATRIC" id="fig|515635.4.peg.1185"/>
<dbReference type="eggNOG" id="COG0289">
    <property type="taxonomic scope" value="Bacteria"/>
</dbReference>
<dbReference type="HOGENOM" id="CLU_047479_0_1_0"/>
<dbReference type="InParanoid" id="B8E2S7"/>
<dbReference type="OrthoDB" id="9790352at2"/>
<dbReference type="UniPathway" id="UPA00034">
    <property type="reaction ID" value="UER00018"/>
</dbReference>
<dbReference type="Proteomes" id="UP000007719">
    <property type="component" value="Chromosome"/>
</dbReference>
<dbReference type="GO" id="GO:0005829">
    <property type="term" value="C:cytosol"/>
    <property type="evidence" value="ECO:0000318"/>
    <property type="project" value="GO_Central"/>
</dbReference>
<dbReference type="GO" id="GO:0008839">
    <property type="term" value="F:4-hydroxy-tetrahydrodipicolinate reductase"/>
    <property type="evidence" value="ECO:0000318"/>
    <property type="project" value="GO_Central"/>
</dbReference>
<dbReference type="GO" id="GO:0051287">
    <property type="term" value="F:NAD binding"/>
    <property type="evidence" value="ECO:0007669"/>
    <property type="project" value="UniProtKB-UniRule"/>
</dbReference>
<dbReference type="GO" id="GO:0050661">
    <property type="term" value="F:NADP binding"/>
    <property type="evidence" value="ECO:0007669"/>
    <property type="project" value="UniProtKB-UniRule"/>
</dbReference>
<dbReference type="GO" id="GO:0016726">
    <property type="term" value="F:oxidoreductase activity, acting on CH or CH2 groups, NAD or NADP as acceptor"/>
    <property type="evidence" value="ECO:0007669"/>
    <property type="project" value="UniProtKB-UniRule"/>
</dbReference>
<dbReference type="GO" id="GO:0019877">
    <property type="term" value="P:diaminopimelate biosynthetic process"/>
    <property type="evidence" value="ECO:0000318"/>
    <property type="project" value="GO_Central"/>
</dbReference>
<dbReference type="GO" id="GO:0009089">
    <property type="term" value="P:lysine biosynthetic process via diaminopimelate"/>
    <property type="evidence" value="ECO:0007669"/>
    <property type="project" value="UniProtKB-UniRule"/>
</dbReference>
<dbReference type="CDD" id="cd02274">
    <property type="entry name" value="DHDPR_N"/>
    <property type="match status" value="1"/>
</dbReference>
<dbReference type="FunFam" id="3.30.360.10:FF:000009">
    <property type="entry name" value="4-hydroxy-tetrahydrodipicolinate reductase"/>
    <property type="match status" value="1"/>
</dbReference>
<dbReference type="Gene3D" id="3.30.360.10">
    <property type="entry name" value="Dihydrodipicolinate Reductase, domain 2"/>
    <property type="match status" value="1"/>
</dbReference>
<dbReference type="Gene3D" id="3.40.50.720">
    <property type="entry name" value="NAD(P)-binding Rossmann-like Domain"/>
    <property type="match status" value="1"/>
</dbReference>
<dbReference type="HAMAP" id="MF_00102">
    <property type="entry name" value="DapB"/>
    <property type="match status" value="1"/>
</dbReference>
<dbReference type="InterPro" id="IPR022663">
    <property type="entry name" value="DapB_C"/>
</dbReference>
<dbReference type="InterPro" id="IPR000846">
    <property type="entry name" value="DapB_N"/>
</dbReference>
<dbReference type="InterPro" id="IPR022664">
    <property type="entry name" value="DapB_N_CS"/>
</dbReference>
<dbReference type="InterPro" id="IPR023940">
    <property type="entry name" value="DHDPR_bac"/>
</dbReference>
<dbReference type="InterPro" id="IPR036291">
    <property type="entry name" value="NAD(P)-bd_dom_sf"/>
</dbReference>
<dbReference type="NCBIfam" id="TIGR00036">
    <property type="entry name" value="dapB"/>
    <property type="match status" value="1"/>
</dbReference>
<dbReference type="PANTHER" id="PTHR20836:SF0">
    <property type="entry name" value="4-HYDROXY-TETRAHYDRODIPICOLINATE REDUCTASE 1, CHLOROPLASTIC-RELATED"/>
    <property type="match status" value="1"/>
</dbReference>
<dbReference type="PANTHER" id="PTHR20836">
    <property type="entry name" value="DIHYDRODIPICOLINATE REDUCTASE"/>
    <property type="match status" value="1"/>
</dbReference>
<dbReference type="Pfam" id="PF05173">
    <property type="entry name" value="DapB_C"/>
    <property type="match status" value="1"/>
</dbReference>
<dbReference type="Pfam" id="PF01113">
    <property type="entry name" value="DapB_N"/>
    <property type="match status" value="1"/>
</dbReference>
<dbReference type="PIRSF" id="PIRSF000161">
    <property type="entry name" value="DHPR"/>
    <property type="match status" value="1"/>
</dbReference>
<dbReference type="SUPFAM" id="SSF55347">
    <property type="entry name" value="Glyceraldehyde-3-phosphate dehydrogenase-like, C-terminal domain"/>
    <property type="match status" value="1"/>
</dbReference>
<dbReference type="SUPFAM" id="SSF51735">
    <property type="entry name" value="NAD(P)-binding Rossmann-fold domains"/>
    <property type="match status" value="1"/>
</dbReference>
<dbReference type="PROSITE" id="PS01298">
    <property type="entry name" value="DAPB"/>
    <property type="match status" value="1"/>
</dbReference>
<evidence type="ECO:0000255" key="1">
    <source>
        <dbReference type="HAMAP-Rule" id="MF_00102"/>
    </source>
</evidence>
<evidence type="ECO:0000305" key="2"/>
<protein>
    <recommendedName>
        <fullName evidence="1">4-hydroxy-tetrahydrodipicolinate reductase</fullName>
        <shortName evidence="1">HTPA reductase</shortName>
        <ecNumber evidence="1">1.17.1.8</ecNumber>
    </recommendedName>
</protein>
<accession>B8E2S7</accession>
<gene>
    <name evidence="1" type="primary">dapB</name>
    <name type="ordered locus">Dtur_1148</name>
</gene>
<feature type="chain" id="PRO_1000117367" description="4-hydroxy-tetrahydrodipicolinate reductase">
    <location>
        <begin position="1"/>
        <end position="268"/>
    </location>
</feature>
<feature type="active site" description="Proton donor/acceptor" evidence="1">
    <location>
        <position position="151"/>
    </location>
</feature>
<feature type="active site" description="Proton donor" evidence="1">
    <location>
        <position position="155"/>
    </location>
</feature>
<feature type="binding site" evidence="1">
    <location>
        <begin position="8"/>
        <end position="13"/>
    </location>
    <ligand>
        <name>NAD(+)</name>
        <dbReference type="ChEBI" id="CHEBI:57540"/>
    </ligand>
</feature>
<feature type="binding site" evidence="1">
    <location>
        <position position="34"/>
    </location>
    <ligand>
        <name>NAD(+)</name>
        <dbReference type="ChEBI" id="CHEBI:57540"/>
    </ligand>
</feature>
<feature type="binding site" evidence="1">
    <location>
        <begin position="95"/>
        <end position="97"/>
    </location>
    <ligand>
        <name>NAD(+)</name>
        <dbReference type="ChEBI" id="CHEBI:57540"/>
    </ligand>
</feature>
<feature type="binding site" evidence="1">
    <location>
        <begin position="121"/>
        <end position="124"/>
    </location>
    <ligand>
        <name>NAD(+)</name>
        <dbReference type="ChEBI" id="CHEBI:57540"/>
    </ligand>
</feature>
<feature type="binding site" evidence="1">
    <location>
        <position position="152"/>
    </location>
    <ligand>
        <name>(S)-2,3,4,5-tetrahydrodipicolinate</name>
        <dbReference type="ChEBI" id="CHEBI:16845"/>
    </ligand>
</feature>
<feature type="binding site" evidence="1">
    <location>
        <begin position="161"/>
        <end position="162"/>
    </location>
    <ligand>
        <name>(S)-2,3,4,5-tetrahydrodipicolinate</name>
        <dbReference type="ChEBI" id="CHEBI:16845"/>
    </ligand>
</feature>
<comment type="function">
    <text evidence="1">Catalyzes the conversion of 4-hydroxy-tetrahydrodipicolinate (HTPA) to tetrahydrodipicolinate.</text>
</comment>
<comment type="catalytic activity">
    <reaction evidence="1">
        <text>(S)-2,3,4,5-tetrahydrodipicolinate + NAD(+) + H2O = (2S,4S)-4-hydroxy-2,3,4,5-tetrahydrodipicolinate + NADH + H(+)</text>
        <dbReference type="Rhea" id="RHEA:35323"/>
        <dbReference type="ChEBI" id="CHEBI:15377"/>
        <dbReference type="ChEBI" id="CHEBI:15378"/>
        <dbReference type="ChEBI" id="CHEBI:16845"/>
        <dbReference type="ChEBI" id="CHEBI:57540"/>
        <dbReference type="ChEBI" id="CHEBI:57945"/>
        <dbReference type="ChEBI" id="CHEBI:67139"/>
        <dbReference type="EC" id="1.17.1.8"/>
    </reaction>
</comment>
<comment type="catalytic activity">
    <reaction evidence="1">
        <text>(S)-2,3,4,5-tetrahydrodipicolinate + NADP(+) + H2O = (2S,4S)-4-hydroxy-2,3,4,5-tetrahydrodipicolinate + NADPH + H(+)</text>
        <dbReference type="Rhea" id="RHEA:35331"/>
        <dbReference type="ChEBI" id="CHEBI:15377"/>
        <dbReference type="ChEBI" id="CHEBI:15378"/>
        <dbReference type="ChEBI" id="CHEBI:16845"/>
        <dbReference type="ChEBI" id="CHEBI:57783"/>
        <dbReference type="ChEBI" id="CHEBI:58349"/>
        <dbReference type="ChEBI" id="CHEBI:67139"/>
        <dbReference type="EC" id="1.17.1.8"/>
    </reaction>
</comment>
<comment type="pathway">
    <text evidence="1">Amino-acid biosynthesis; L-lysine biosynthesis via DAP pathway; (S)-tetrahydrodipicolinate from L-aspartate: step 4/4.</text>
</comment>
<comment type="subcellular location">
    <subcellularLocation>
        <location evidence="1">Cytoplasm</location>
    </subcellularLocation>
</comment>
<comment type="similarity">
    <text evidence="1">Belongs to the DapB family.</text>
</comment>
<comment type="caution">
    <text evidence="2">Was originally thought to be a dihydrodipicolinate reductase (DHDPR), catalyzing the conversion of dihydrodipicolinate to tetrahydrodipicolinate. However, it was shown in E.coli that the substrate of the enzymatic reaction is not dihydrodipicolinate (DHDP) but in fact (2S,4S)-4-hydroxy-2,3,4,5-tetrahydrodipicolinic acid (HTPA), the product released by the DapA-catalyzed reaction.</text>
</comment>